<accession>Q67VZ8</accession>
<accession>A0A0P0WU79</accession>
<reference key="1">
    <citation type="journal article" date="2005" name="Plant Physiol.">
        <title>Phylogenetic analyses identify 10 classes of the protein disulfide isomerase family in plants, including single-domain protein disulfide isomerase-related proteins.</title>
        <authorList>
            <person name="Houston N.L."/>
            <person name="Fan C."/>
            <person name="Xiang J.Q."/>
            <person name="Schulze J.M."/>
            <person name="Jung R."/>
            <person name="Boston R.S."/>
        </authorList>
    </citation>
    <scope>NUCLEOTIDE SEQUENCE [MRNA]</scope>
    <source>
        <strain>cv. Nipponbare</strain>
    </source>
</reference>
<reference key="2">
    <citation type="journal article" date="2005" name="Nature">
        <title>The map-based sequence of the rice genome.</title>
        <authorList>
            <consortium name="International rice genome sequencing project (IRGSP)"/>
        </authorList>
    </citation>
    <scope>NUCLEOTIDE SEQUENCE [LARGE SCALE GENOMIC DNA]</scope>
    <source>
        <strain>cv. Nipponbare</strain>
    </source>
</reference>
<reference key="3">
    <citation type="journal article" date="2008" name="Nucleic Acids Res.">
        <title>The rice annotation project database (RAP-DB): 2008 update.</title>
        <authorList>
            <consortium name="The rice annotation project (RAP)"/>
        </authorList>
    </citation>
    <scope>GENOME REANNOTATION</scope>
    <source>
        <strain>cv. Nipponbare</strain>
    </source>
</reference>
<reference key="4">
    <citation type="journal article" date="2013" name="Rice">
        <title>Improvement of the Oryza sativa Nipponbare reference genome using next generation sequence and optical map data.</title>
        <authorList>
            <person name="Kawahara Y."/>
            <person name="de la Bastide M."/>
            <person name="Hamilton J.P."/>
            <person name="Kanamori H."/>
            <person name="McCombie W.R."/>
            <person name="Ouyang S."/>
            <person name="Schwartz D.C."/>
            <person name="Tanaka T."/>
            <person name="Wu J."/>
            <person name="Zhou S."/>
            <person name="Childs K.L."/>
            <person name="Davidson R.M."/>
            <person name="Lin H."/>
            <person name="Quesada-Ocampo L."/>
            <person name="Vaillancourt B."/>
            <person name="Sakai H."/>
            <person name="Lee S.S."/>
            <person name="Kim J."/>
            <person name="Numa H."/>
            <person name="Itoh T."/>
            <person name="Buell C.R."/>
            <person name="Matsumoto T."/>
        </authorList>
    </citation>
    <scope>GENOME REANNOTATION</scope>
    <source>
        <strain>cv. Nipponbare</strain>
    </source>
</reference>
<reference key="5">
    <citation type="journal article" date="2005" name="PLoS Biol.">
        <title>The genomes of Oryza sativa: a history of duplications.</title>
        <authorList>
            <person name="Yu J."/>
            <person name="Wang J."/>
            <person name="Lin W."/>
            <person name="Li S."/>
            <person name="Li H."/>
            <person name="Zhou J."/>
            <person name="Ni P."/>
            <person name="Dong W."/>
            <person name="Hu S."/>
            <person name="Zeng C."/>
            <person name="Zhang J."/>
            <person name="Zhang Y."/>
            <person name="Li R."/>
            <person name="Xu Z."/>
            <person name="Li S."/>
            <person name="Li X."/>
            <person name="Zheng H."/>
            <person name="Cong L."/>
            <person name="Lin L."/>
            <person name="Yin J."/>
            <person name="Geng J."/>
            <person name="Li G."/>
            <person name="Shi J."/>
            <person name="Liu J."/>
            <person name="Lv H."/>
            <person name="Li J."/>
            <person name="Wang J."/>
            <person name="Deng Y."/>
            <person name="Ran L."/>
            <person name="Shi X."/>
            <person name="Wang X."/>
            <person name="Wu Q."/>
            <person name="Li C."/>
            <person name="Ren X."/>
            <person name="Wang J."/>
            <person name="Wang X."/>
            <person name="Li D."/>
            <person name="Liu D."/>
            <person name="Zhang X."/>
            <person name="Ji Z."/>
            <person name="Zhao W."/>
            <person name="Sun Y."/>
            <person name="Zhang Z."/>
            <person name="Bao J."/>
            <person name="Han Y."/>
            <person name="Dong L."/>
            <person name="Ji J."/>
            <person name="Chen P."/>
            <person name="Wu S."/>
            <person name="Liu J."/>
            <person name="Xiao Y."/>
            <person name="Bu D."/>
            <person name="Tan J."/>
            <person name="Yang L."/>
            <person name="Ye C."/>
            <person name="Zhang J."/>
            <person name="Xu J."/>
            <person name="Zhou Y."/>
            <person name="Yu Y."/>
            <person name="Zhang B."/>
            <person name="Zhuang S."/>
            <person name="Wei H."/>
            <person name="Liu B."/>
            <person name="Lei M."/>
            <person name="Yu H."/>
            <person name="Li Y."/>
            <person name="Xu H."/>
            <person name="Wei S."/>
            <person name="He X."/>
            <person name="Fang L."/>
            <person name="Zhang Z."/>
            <person name="Zhang Y."/>
            <person name="Huang X."/>
            <person name="Su Z."/>
            <person name="Tong W."/>
            <person name="Li J."/>
            <person name="Tong Z."/>
            <person name="Li S."/>
            <person name="Ye J."/>
            <person name="Wang L."/>
            <person name="Fang L."/>
            <person name="Lei T."/>
            <person name="Chen C.-S."/>
            <person name="Chen H.-C."/>
            <person name="Xu Z."/>
            <person name="Li H."/>
            <person name="Huang H."/>
            <person name="Zhang F."/>
            <person name="Xu H."/>
            <person name="Li N."/>
            <person name="Zhao C."/>
            <person name="Li S."/>
            <person name="Dong L."/>
            <person name="Huang Y."/>
            <person name="Li L."/>
            <person name="Xi Y."/>
            <person name="Qi Q."/>
            <person name="Li W."/>
            <person name="Zhang B."/>
            <person name="Hu W."/>
            <person name="Zhang Y."/>
            <person name="Tian X."/>
            <person name="Jiao Y."/>
            <person name="Liang X."/>
            <person name="Jin J."/>
            <person name="Gao L."/>
            <person name="Zheng W."/>
            <person name="Hao B."/>
            <person name="Liu S.-M."/>
            <person name="Wang W."/>
            <person name="Yuan L."/>
            <person name="Cao M."/>
            <person name="McDermott J."/>
            <person name="Samudrala R."/>
            <person name="Wang J."/>
            <person name="Wong G.K.-S."/>
            <person name="Yang H."/>
        </authorList>
    </citation>
    <scope>NUCLEOTIDE SEQUENCE [LARGE SCALE GENOMIC DNA]</scope>
    <source>
        <strain>cv. Nipponbare</strain>
    </source>
</reference>
<name>APRL2_ORYSJ</name>
<organism>
    <name type="scientific">Oryza sativa subsp. japonica</name>
    <name type="common">Rice</name>
    <dbReference type="NCBI Taxonomy" id="39947"/>
    <lineage>
        <taxon>Eukaryota</taxon>
        <taxon>Viridiplantae</taxon>
        <taxon>Streptophyta</taxon>
        <taxon>Embryophyta</taxon>
        <taxon>Tracheophyta</taxon>
        <taxon>Spermatophyta</taxon>
        <taxon>Magnoliopsida</taxon>
        <taxon>Liliopsida</taxon>
        <taxon>Poales</taxon>
        <taxon>Poaceae</taxon>
        <taxon>BOP clade</taxon>
        <taxon>Oryzoideae</taxon>
        <taxon>Oryzeae</taxon>
        <taxon>Oryzinae</taxon>
        <taxon>Oryza</taxon>
        <taxon>Oryza sativa</taxon>
    </lineage>
</organism>
<keyword id="KW-0325">Glycoprotein</keyword>
<keyword id="KW-0413">Isomerase</keyword>
<keyword id="KW-0472">Membrane</keyword>
<keyword id="KW-1185">Reference proteome</keyword>
<keyword id="KW-0732">Signal</keyword>
<keyword id="KW-0812">Transmembrane</keyword>
<keyword id="KW-1133">Transmembrane helix</keyword>
<protein>
    <recommendedName>
        <fullName>5'-adenylylsulfate reductase-like 2</fullName>
    </recommendedName>
    <alternativeName>
        <fullName>Adenosine 5'-phosphosulfate reductase-like 2</fullName>
        <shortName>APR-like 2</shortName>
        <shortName>OsAPRL2</shortName>
    </alternativeName>
</protein>
<evidence type="ECO:0000255" key="1"/>
<evidence type="ECO:0000255" key="2">
    <source>
        <dbReference type="PROSITE-ProRule" id="PRU00691"/>
    </source>
</evidence>
<evidence type="ECO:0000305" key="3"/>
<dbReference type="EMBL" id="AY739306">
    <property type="protein sequence ID" value="AAX14677.1"/>
    <property type="molecule type" value="mRNA"/>
</dbReference>
<dbReference type="EMBL" id="AP003488">
    <property type="protein sequence ID" value="BAD37254.1"/>
    <property type="molecule type" value="Genomic_DNA"/>
</dbReference>
<dbReference type="EMBL" id="AP004727">
    <property type="protein sequence ID" value="BAD37671.1"/>
    <property type="molecule type" value="Genomic_DNA"/>
</dbReference>
<dbReference type="EMBL" id="AP008212">
    <property type="protein sequence ID" value="BAF19086.1"/>
    <property type="molecule type" value="Genomic_DNA"/>
</dbReference>
<dbReference type="EMBL" id="AP014962">
    <property type="protein sequence ID" value="BAS96828.1"/>
    <property type="molecule type" value="Genomic_DNA"/>
</dbReference>
<dbReference type="EMBL" id="CM000143">
    <property type="protein sequence ID" value="EEE65349.1"/>
    <property type="molecule type" value="Genomic_DNA"/>
</dbReference>
<dbReference type="RefSeq" id="XP_015643977.1">
    <property type="nucleotide sequence ID" value="XM_015788491.1"/>
</dbReference>
<dbReference type="SMR" id="Q67VZ8"/>
<dbReference type="FunCoup" id="Q67VZ8">
    <property type="interactions" value="101"/>
</dbReference>
<dbReference type="GlyCosmos" id="Q67VZ8">
    <property type="glycosylation" value="1 site, No reported glycans"/>
</dbReference>
<dbReference type="PaxDb" id="39947-Q67VZ8"/>
<dbReference type="EnsemblPlants" id="Os06t0220800-01">
    <property type="protein sequence ID" value="Os06t0220800-01"/>
    <property type="gene ID" value="Os06g0220800"/>
</dbReference>
<dbReference type="Gramene" id="Os06t0220800-01">
    <property type="protein sequence ID" value="Os06t0220800-01"/>
    <property type="gene ID" value="Os06g0220800"/>
</dbReference>
<dbReference type="KEGG" id="dosa:Os06g0220800"/>
<dbReference type="eggNOG" id="KOG2640">
    <property type="taxonomic scope" value="Eukaryota"/>
</dbReference>
<dbReference type="HOGENOM" id="CLU_051582_0_0_1"/>
<dbReference type="InParanoid" id="Q67VZ8"/>
<dbReference type="OMA" id="NTDPENC"/>
<dbReference type="OrthoDB" id="19690at2759"/>
<dbReference type="Proteomes" id="UP000000763">
    <property type="component" value="Chromosome 6"/>
</dbReference>
<dbReference type="Proteomes" id="UP000007752">
    <property type="component" value="Chromosome 6"/>
</dbReference>
<dbReference type="Proteomes" id="UP000059680">
    <property type="component" value="Chromosome 6"/>
</dbReference>
<dbReference type="GO" id="GO:0016020">
    <property type="term" value="C:membrane"/>
    <property type="evidence" value="ECO:0007669"/>
    <property type="project" value="UniProtKB-SubCell"/>
</dbReference>
<dbReference type="GO" id="GO:0016853">
    <property type="term" value="F:isomerase activity"/>
    <property type="evidence" value="ECO:0007669"/>
    <property type="project" value="UniProtKB-KW"/>
</dbReference>
<dbReference type="CDD" id="cd02999">
    <property type="entry name" value="PDI_a_ERp44_like"/>
    <property type="match status" value="1"/>
</dbReference>
<dbReference type="Gene3D" id="3.40.30.10">
    <property type="entry name" value="Glutaredoxin"/>
    <property type="match status" value="1"/>
</dbReference>
<dbReference type="InterPro" id="IPR044606">
    <property type="entry name" value="APRL4/6"/>
</dbReference>
<dbReference type="InterPro" id="IPR036249">
    <property type="entry name" value="Thioredoxin-like_sf"/>
</dbReference>
<dbReference type="InterPro" id="IPR013766">
    <property type="entry name" value="Thioredoxin_domain"/>
</dbReference>
<dbReference type="PANTHER" id="PTHR46854">
    <property type="entry name" value="5'-ADENYLYLSULFATE REDUCTASE-LIKE 4-RELATED"/>
    <property type="match status" value="1"/>
</dbReference>
<dbReference type="PANTHER" id="PTHR46854:SF1">
    <property type="entry name" value="5'-ADENYLYLSULFATE REDUCTASE-LIKE 4-RELATED"/>
    <property type="match status" value="1"/>
</dbReference>
<dbReference type="Pfam" id="PF00085">
    <property type="entry name" value="Thioredoxin"/>
    <property type="match status" value="1"/>
</dbReference>
<dbReference type="SUPFAM" id="SSF52833">
    <property type="entry name" value="Thioredoxin-like"/>
    <property type="match status" value="1"/>
</dbReference>
<dbReference type="PROSITE" id="PS51352">
    <property type="entry name" value="THIOREDOXIN_2"/>
    <property type="match status" value="1"/>
</dbReference>
<proteinExistence type="evidence at transcript level"/>
<gene>
    <name type="primary">APRL2</name>
    <name type="ordered locus">Os06g0220800</name>
    <name type="ordered locus">LOC_Os06g11740</name>
    <name type="ORF">OsJ_20625</name>
    <name type="ORF">P0436F11.46</name>
    <name type="ORF">P0516A04.7</name>
</gene>
<feature type="signal peptide" evidence="1">
    <location>
        <begin position="1"/>
        <end position="19"/>
    </location>
</feature>
<feature type="chain" id="PRO_0000400045" description="5'-adenylylsulfate reductase-like 2">
    <location>
        <begin position="20"/>
        <end position="282"/>
    </location>
</feature>
<feature type="transmembrane region" description="Helical" evidence="1">
    <location>
        <begin position="205"/>
        <end position="225"/>
    </location>
</feature>
<feature type="domain" description="Thioredoxin" evidence="2">
    <location>
        <begin position="20"/>
        <end position="159"/>
    </location>
</feature>
<feature type="glycosylation site" description="N-linked (GlcNAc...) asparagine" evidence="1">
    <location>
        <position position="134"/>
    </location>
</feature>
<comment type="subcellular location">
    <subcellularLocation>
        <location evidence="3">Membrane</location>
        <topology evidence="3">Single-pass membrane protein</topology>
    </subcellularLocation>
</comment>
<sequence length="282" mass="31557">MRWWPALPLLLLAVAVAGAGDAAPVCTRPSAAEAIVGSPEACRSPLRRPLGVTEGDDAILARAVNLLHANKEDFAAVLFYASWCPFSQECRLRFEKLACIFPTIRHLAIEESTVRLRTRYRYGIHGYPTLFLINSTVRVRYHGPRTVKSLAAFYNDVSGINPSMDPAVGDDNIEPKRDCEQEKCLFWSARTPENILQPDTYLTLAASFVILRLLYLFYPKITAFVKRTWSRRTLFTCLEQGKHKFNRVYPSKQGNLHDGARHATAWASKSLASVSIGEPSTS</sequence>